<dbReference type="GO" id="GO:0005576">
    <property type="term" value="C:extracellular region"/>
    <property type="evidence" value="ECO:0007669"/>
    <property type="project" value="UniProtKB-SubCell"/>
</dbReference>
<dbReference type="GO" id="GO:0005184">
    <property type="term" value="F:neuropeptide hormone activity"/>
    <property type="evidence" value="ECO:0007669"/>
    <property type="project" value="InterPro"/>
</dbReference>
<dbReference type="GO" id="GO:0007218">
    <property type="term" value="P:neuropeptide signaling pathway"/>
    <property type="evidence" value="ECO:0007669"/>
    <property type="project" value="UniProtKB-KW"/>
</dbReference>
<dbReference type="InterPro" id="IPR001484">
    <property type="entry name" value="Pyrokinin_CS"/>
</dbReference>
<dbReference type="PROSITE" id="PS00539">
    <property type="entry name" value="PYROKININ"/>
    <property type="match status" value="1"/>
</dbReference>
<protein>
    <recommendedName>
        <fullName evidence="1">Pyrokinin-5</fullName>
    </recommendedName>
    <alternativeName>
        <fullName evidence="1">FXPRL-amide</fullName>
    </alternativeName>
    <alternativeName>
        <fullName evidence="4">PerBi-Capa-PK</fullName>
    </alternativeName>
</protein>
<organism>
    <name type="scientific">Perisphaeria aff. bicolor (strain BF-2008)</name>
    <name type="common">Cockroach</name>
    <dbReference type="NCBI Taxonomy" id="521515"/>
    <lineage>
        <taxon>Eukaryota</taxon>
        <taxon>Metazoa</taxon>
        <taxon>Ecdysozoa</taxon>
        <taxon>Arthropoda</taxon>
        <taxon>Hexapoda</taxon>
        <taxon>Insecta</taxon>
        <taxon>Pterygota</taxon>
        <taxon>Neoptera</taxon>
        <taxon>Polyneoptera</taxon>
        <taxon>Dictyoptera</taxon>
        <taxon>Blattodea</taxon>
        <taxon>Blaberoidea</taxon>
        <taxon>Blaberidae</taxon>
        <taxon>Perisphaerinae</taxon>
        <taxon>Perisphaeria</taxon>
    </lineage>
</organism>
<evidence type="ECO:0000250" key="1">
    <source>
        <dbReference type="UniProtKB" id="P82617"/>
    </source>
</evidence>
<evidence type="ECO:0000255" key="2"/>
<evidence type="ECO:0000269" key="3">
    <source>
    </source>
</evidence>
<evidence type="ECO:0000303" key="4">
    <source>
    </source>
</evidence>
<evidence type="ECO:0000305" key="5"/>
<keyword id="KW-0027">Amidation</keyword>
<keyword id="KW-0903">Direct protein sequencing</keyword>
<keyword id="KW-0527">Neuropeptide</keyword>
<keyword id="KW-0964">Secreted</keyword>
<sequence length="17" mass="1782">SGETSGEGNGMWFGPRL</sequence>
<accession>P85708</accession>
<proteinExistence type="evidence at protein level"/>
<comment type="function">
    <text evidence="1">Myoactive.</text>
</comment>
<comment type="subcellular location">
    <subcellularLocation>
        <location evidence="5">Secreted</location>
    </subcellularLocation>
</comment>
<comment type="similarity">
    <text evidence="2">Belongs to the pyrokinin family.</text>
</comment>
<name>PPK5_PERBB</name>
<reference evidence="5" key="1">
    <citation type="journal article" date="2009" name="BMC Evol. Biol.">
        <title>A proteomic approach for studying insect phylogeny: CAPA peptides of ancient insect taxa (Dictyoptera, Blattoptera) as a test case.</title>
        <authorList>
            <person name="Roth S."/>
            <person name="Fromm B."/>
            <person name="Gaede G."/>
            <person name="Predel R."/>
        </authorList>
    </citation>
    <scope>PROTEIN SEQUENCE</scope>
    <scope>AMIDATION AT LEU-17</scope>
    <source>
        <tissue evidence="3">Abdominal perisympathetic organs</tissue>
    </source>
</reference>
<feature type="peptide" id="PRO_0000378710" description="Pyrokinin-5" evidence="3">
    <location>
        <begin position="1"/>
        <end position="17"/>
    </location>
</feature>
<feature type="modified residue" description="Leucine amide" evidence="3">
    <location>
        <position position="17"/>
    </location>
</feature>